<protein>
    <recommendedName>
        <fullName evidence="1">Histidinol-phosphate aminotransferase</fullName>
        <ecNumber evidence="1">2.6.1.9</ecNumber>
    </recommendedName>
    <alternativeName>
        <fullName evidence="1">Imidazole acetol-phosphate transaminase</fullName>
    </alternativeName>
</protein>
<comment type="catalytic activity">
    <reaction evidence="1">
        <text>L-histidinol phosphate + 2-oxoglutarate = 3-(imidazol-4-yl)-2-oxopropyl phosphate + L-glutamate</text>
        <dbReference type="Rhea" id="RHEA:23744"/>
        <dbReference type="ChEBI" id="CHEBI:16810"/>
        <dbReference type="ChEBI" id="CHEBI:29985"/>
        <dbReference type="ChEBI" id="CHEBI:57766"/>
        <dbReference type="ChEBI" id="CHEBI:57980"/>
        <dbReference type="EC" id="2.6.1.9"/>
    </reaction>
</comment>
<comment type="cofactor">
    <cofactor evidence="1">
        <name>pyridoxal 5'-phosphate</name>
        <dbReference type="ChEBI" id="CHEBI:597326"/>
    </cofactor>
</comment>
<comment type="pathway">
    <text evidence="1">Amino-acid biosynthesis; L-histidine biosynthesis; L-histidine from 5-phospho-alpha-D-ribose 1-diphosphate: step 7/9.</text>
</comment>
<comment type="subunit">
    <text evidence="1">Homodimer.</text>
</comment>
<comment type="similarity">
    <text evidence="1">Belongs to the class-II pyridoxal-phosphate-dependent aminotransferase family. Histidinol-phosphate aminotransferase subfamily.</text>
</comment>
<accession>A4XMY1</accession>
<reference key="1">
    <citation type="submission" date="2007-04" db="EMBL/GenBank/DDBJ databases">
        <title>Genome sequence of the thermophilic hydrogen-producing bacterium Caldicellulosiruptor saccharolyticus DSM 8903.</title>
        <authorList>
            <person name="Copeland A."/>
            <person name="Lucas S."/>
            <person name="Lapidus A."/>
            <person name="Barry K."/>
            <person name="Detter J.C."/>
            <person name="Glavina del Rio T."/>
            <person name="Hammon N."/>
            <person name="Israni S."/>
            <person name="Dalin E."/>
            <person name="Tice H."/>
            <person name="Pitluck S."/>
            <person name="Kiss H."/>
            <person name="Brettin T."/>
            <person name="Bruce D."/>
            <person name="Han C."/>
            <person name="Schmutz J."/>
            <person name="Larimer F."/>
            <person name="Land M."/>
            <person name="Hauser L."/>
            <person name="Kyrpides N."/>
            <person name="Lykidis A."/>
            <person name="van de Werken H.J.G."/>
            <person name="Verhaart M.R.A."/>
            <person name="VanFossen A.L."/>
            <person name="Lewis D.L."/>
            <person name="Nichols J.D."/>
            <person name="Goorissen H.P."/>
            <person name="van Niel E.W.J."/>
            <person name="Stams F.J.M."/>
            <person name="Willquist K.U."/>
            <person name="Ward D.E."/>
            <person name="van der Oost J."/>
            <person name="Kelly R.M."/>
            <person name="Kengen S.M.W."/>
            <person name="Richardson P."/>
        </authorList>
    </citation>
    <scope>NUCLEOTIDE SEQUENCE [LARGE SCALE GENOMIC DNA]</scope>
    <source>
        <strain>ATCC 43494 / DSM 8903 / Tp8T 6331</strain>
    </source>
</reference>
<evidence type="ECO:0000255" key="1">
    <source>
        <dbReference type="HAMAP-Rule" id="MF_01023"/>
    </source>
</evidence>
<gene>
    <name evidence="1" type="primary">hisC</name>
    <name type="ordered locus">Csac_2697</name>
</gene>
<dbReference type="EC" id="2.6.1.9" evidence="1"/>
<dbReference type="EMBL" id="CP000679">
    <property type="protein sequence ID" value="ABP68266.1"/>
    <property type="molecule type" value="Genomic_DNA"/>
</dbReference>
<dbReference type="RefSeq" id="WP_011918182.1">
    <property type="nucleotide sequence ID" value="NC_009437.1"/>
</dbReference>
<dbReference type="SMR" id="A4XMY1"/>
<dbReference type="STRING" id="351627.Csac_2697"/>
<dbReference type="KEGG" id="csc:Csac_2697"/>
<dbReference type="eggNOG" id="COG0079">
    <property type="taxonomic scope" value="Bacteria"/>
</dbReference>
<dbReference type="HOGENOM" id="CLU_017584_3_3_9"/>
<dbReference type="OrthoDB" id="9813612at2"/>
<dbReference type="UniPathway" id="UPA00031">
    <property type="reaction ID" value="UER00012"/>
</dbReference>
<dbReference type="Proteomes" id="UP000000256">
    <property type="component" value="Chromosome"/>
</dbReference>
<dbReference type="GO" id="GO:0004400">
    <property type="term" value="F:histidinol-phosphate transaminase activity"/>
    <property type="evidence" value="ECO:0007669"/>
    <property type="project" value="UniProtKB-UniRule"/>
</dbReference>
<dbReference type="GO" id="GO:0030170">
    <property type="term" value="F:pyridoxal phosphate binding"/>
    <property type="evidence" value="ECO:0007669"/>
    <property type="project" value="InterPro"/>
</dbReference>
<dbReference type="GO" id="GO:0000105">
    <property type="term" value="P:L-histidine biosynthetic process"/>
    <property type="evidence" value="ECO:0007669"/>
    <property type="project" value="UniProtKB-UniRule"/>
</dbReference>
<dbReference type="CDD" id="cd00609">
    <property type="entry name" value="AAT_like"/>
    <property type="match status" value="1"/>
</dbReference>
<dbReference type="Gene3D" id="3.90.1150.10">
    <property type="entry name" value="Aspartate Aminotransferase, domain 1"/>
    <property type="match status" value="1"/>
</dbReference>
<dbReference type="Gene3D" id="3.40.640.10">
    <property type="entry name" value="Type I PLP-dependent aspartate aminotransferase-like (Major domain)"/>
    <property type="match status" value="1"/>
</dbReference>
<dbReference type="HAMAP" id="MF_01023">
    <property type="entry name" value="HisC_aminotrans_2"/>
    <property type="match status" value="1"/>
</dbReference>
<dbReference type="InterPro" id="IPR004839">
    <property type="entry name" value="Aminotransferase_I/II_large"/>
</dbReference>
<dbReference type="InterPro" id="IPR005861">
    <property type="entry name" value="HisP_aminotrans"/>
</dbReference>
<dbReference type="InterPro" id="IPR050106">
    <property type="entry name" value="HistidinolP_aminotransfase"/>
</dbReference>
<dbReference type="InterPro" id="IPR015424">
    <property type="entry name" value="PyrdxlP-dep_Trfase"/>
</dbReference>
<dbReference type="InterPro" id="IPR015421">
    <property type="entry name" value="PyrdxlP-dep_Trfase_major"/>
</dbReference>
<dbReference type="InterPro" id="IPR015422">
    <property type="entry name" value="PyrdxlP-dep_Trfase_small"/>
</dbReference>
<dbReference type="NCBIfam" id="TIGR01141">
    <property type="entry name" value="hisC"/>
    <property type="match status" value="1"/>
</dbReference>
<dbReference type="PANTHER" id="PTHR43643:SF3">
    <property type="entry name" value="HISTIDINOL-PHOSPHATE AMINOTRANSFERASE"/>
    <property type="match status" value="1"/>
</dbReference>
<dbReference type="PANTHER" id="PTHR43643">
    <property type="entry name" value="HISTIDINOL-PHOSPHATE AMINOTRANSFERASE 2"/>
    <property type="match status" value="1"/>
</dbReference>
<dbReference type="Pfam" id="PF00155">
    <property type="entry name" value="Aminotran_1_2"/>
    <property type="match status" value="1"/>
</dbReference>
<dbReference type="SUPFAM" id="SSF53383">
    <property type="entry name" value="PLP-dependent transferases"/>
    <property type="match status" value="1"/>
</dbReference>
<name>HIS8_CALS8</name>
<proteinExistence type="inferred from homology"/>
<keyword id="KW-0028">Amino-acid biosynthesis</keyword>
<keyword id="KW-0032">Aminotransferase</keyword>
<keyword id="KW-0368">Histidine biosynthesis</keyword>
<keyword id="KW-0663">Pyridoxal phosphate</keyword>
<keyword id="KW-0808">Transferase</keyword>
<organism>
    <name type="scientific">Caldicellulosiruptor saccharolyticus (strain ATCC 43494 / DSM 8903 / Tp8T 6331)</name>
    <dbReference type="NCBI Taxonomy" id="351627"/>
    <lineage>
        <taxon>Bacteria</taxon>
        <taxon>Bacillati</taxon>
        <taxon>Bacillota</taxon>
        <taxon>Bacillota incertae sedis</taxon>
        <taxon>Caldicellulosiruptorales</taxon>
        <taxon>Caldicellulosiruptoraceae</taxon>
        <taxon>Caldicellulosiruptor</taxon>
    </lineage>
</organism>
<feature type="chain" id="PRO_0000319747" description="Histidinol-phosphate aminotransferase">
    <location>
        <begin position="1"/>
        <end position="358"/>
    </location>
</feature>
<feature type="modified residue" description="N6-(pyridoxal phosphate)lysine" evidence="1">
    <location>
        <position position="221"/>
    </location>
</feature>
<sequence length="358" mass="40698">MFREVIRTISPYIPGKPISEVKRELGLEKVIKLASNENPLGPSENVKKAIKESLDDLSLYPDGNCTELKLKLAKKLNVKPTQIIFGAGSDEITQLIASIFINPGDNSIMARPSFPRYETVTKVMGGIPIEIPLKNYTHDLEEFSKHINERTRVIWICNPNNPTGTIVKKDELYNFIKSVPSEIAVVVDQAYKEYIDDPEYPDAIHWLDEFKNLIVLQTFSKIYGLASLRIGYAIASEEIIEKLNRVRPPFNVNHVAQIAAIAALDDQEHIEKAKELNKKSLEFFYKSFEEMKLPYIKSYGNFVMVDVTKDAVEVFKKLLLKGIIVRPGDIFDMPTYIRVTTGLESDNMEFIKALKEVL</sequence>